<reference key="1">
    <citation type="journal article" date="1989" name="J. Biol. Chem.">
        <title>Molecular cloning of the type 5, iron-containing, tartrate-resistant acid phosphatase from human placenta.</title>
        <authorList>
            <person name="Ketcham C.M."/>
            <person name="Roberts R.M."/>
            <person name="Simmen R.C.M."/>
            <person name="Nick H.S."/>
        </authorList>
    </citation>
    <scope>NUCLEOTIDE SEQUENCE [MRNA]</scope>
    <source>
        <tissue>Placenta</tissue>
    </source>
</reference>
<reference key="2">
    <citation type="journal article" date="1990" name="Eur. J. Biochem.">
        <title>Type 5 acid phosphatase. Sequence, expression and chromosomal localization of a differentiation-associated protein of the human macrophage.</title>
        <authorList>
            <person name="Lord D.K."/>
            <person name="Cross N.C.P."/>
            <person name="Bevilacqua M.A."/>
            <person name="Roder S.H."/>
            <person name="Gorman P.A."/>
            <person name="Groves A.V."/>
            <person name="Moss D.W."/>
            <person name="Sheer D."/>
            <person name="Cox T.M."/>
        </authorList>
    </citation>
    <scope>NUCLEOTIDE SEQUENCE [MRNA]</scope>
    <source>
        <tissue>Placenta</tissue>
    </source>
</reference>
<reference key="3">
    <citation type="submission" date="2004-06" db="EMBL/GenBank/DDBJ databases">
        <title>Cloning of human full open reading frames in Gateway(TM) system entry vector (pDONR201).</title>
        <authorList>
            <person name="Ebert L."/>
            <person name="Schick M."/>
            <person name="Neubert P."/>
            <person name="Schatten R."/>
            <person name="Henze S."/>
            <person name="Korn B."/>
        </authorList>
    </citation>
    <scope>NUCLEOTIDE SEQUENCE [LARGE SCALE MRNA]</scope>
    <scope>VARIANTS MET-148 AND MET-200</scope>
</reference>
<reference key="4">
    <citation type="journal article" date="2004" name="Nat. Genet.">
        <title>Complete sequencing and characterization of 21,243 full-length human cDNAs.</title>
        <authorList>
            <person name="Ota T."/>
            <person name="Suzuki Y."/>
            <person name="Nishikawa T."/>
            <person name="Otsuki T."/>
            <person name="Sugiyama T."/>
            <person name="Irie R."/>
            <person name="Wakamatsu A."/>
            <person name="Hayashi K."/>
            <person name="Sato H."/>
            <person name="Nagai K."/>
            <person name="Kimura K."/>
            <person name="Makita H."/>
            <person name="Sekine M."/>
            <person name="Obayashi M."/>
            <person name="Nishi T."/>
            <person name="Shibahara T."/>
            <person name="Tanaka T."/>
            <person name="Ishii S."/>
            <person name="Yamamoto J."/>
            <person name="Saito K."/>
            <person name="Kawai Y."/>
            <person name="Isono Y."/>
            <person name="Nakamura Y."/>
            <person name="Nagahari K."/>
            <person name="Murakami K."/>
            <person name="Yasuda T."/>
            <person name="Iwayanagi T."/>
            <person name="Wagatsuma M."/>
            <person name="Shiratori A."/>
            <person name="Sudo H."/>
            <person name="Hosoiri T."/>
            <person name="Kaku Y."/>
            <person name="Kodaira H."/>
            <person name="Kondo H."/>
            <person name="Sugawara M."/>
            <person name="Takahashi M."/>
            <person name="Kanda K."/>
            <person name="Yokoi T."/>
            <person name="Furuya T."/>
            <person name="Kikkawa E."/>
            <person name="Omura Y."/>
            <person name="Abe K."/>
            <person name="Kamihara K."/>
            <person name="Katsuta N."/>
            <person name="Sato K."/>
            <person name="Tanikawa M."/>
            <person name="Yamazaki M."/>
            <person name="Ninomiya K."/>
            <person name="Ishibashi T."/>
            <person name="Yamashita H."/>
            <person name="Murakawa K."/>
            <person name="Fujimori K."/>
            <person name="Tanai H."/>
            <person name="Kimata M."/>
            <person name="Watanabe M."/>
            <person name="Hiraoka S."/>
            <person name="Chiba Y."/>
            <person name="Ishida S."/>
            <person name="Ono Y."/>
            <person name="Takiguchi S."/>
            <person name="Watanabe S."/>
            <person name="Yosida M."/>
            <person name="Hotuta T."/>
            <person name="Kusano J."/>
            <person name="Kanehori K."/>
            <person name="Takahashi-Fujii A."/>
            <person name="Hara H."/>
            <person name="Tanase T.-O."/>
            <person name="Nomura Y."/>
            <person name="Togiya S."/>
            <person name="Komai F."/>
            <person name="Hara R."/>
            <person name="Takeuchi K."/>
            <person name="Arita M."/>
            <person name="Imose N."/>
            <person name="Musashino K."/>
            <person name="Yuuki H."/>
            <person name="Oshima A."/>
            <person name="Sasaki N."/>
            <person name="Aotsuka S."/>
            <person name="Yoshikawa Y."/>
            <person name="Matsunawa H."/>
            <person name="Ichihara T."/>
            <person name="Shiohata N."/>
            <person name="Sano S."/>
            <person name="Moriya S."/>
            <person name="Momiyama H."/>
            <person name="Satoh N."/>
            <person name="Takami S."/>
            <person name="Terashima Y."/>
            <person name="Suzuki O."/>
            <person name="Nakagawa S."/>
            <person name="Senoh A."/>
            <person name="Mizoguchi H."/>
            <person name="Goto Y."/>
            <person name="Shimizu F."/>
            <person name="Wakebe H."/>
            <person name="Hishigaki H."/>
            <person name="Watanabe T."/>
            <person name="Sugiyama A."/>
            <person name="Takemoto M."/>
            <person name="Kawakami B."/>
            <person name="Yamazaki M."/>
            <person name="Watanabe K."/>
            <person name="Kumagai A."/>
            <person name="Itakura S."/>
            <person name="Fukuzumi Y."/>
            <person name="Fujimori Y."/>
            <person name="Komiyama M."/>
            <person name="Tashiro H."/>
            <person name="Tanigami A."/>
            <person name="Fujiwara T."/>
            <person name="Ono T."/>
            <person name="Yamada K."/>
            <person name="Fujii Y."/>
            <person name="Ozaki K."/>
            <person name="Hirao M."/>
            <person name="Ohmori Y."/>
            <person name="Kawabata A."/>
            <person name="Hikiji T."/>
            <person name="Kobatake N."/>
            <person name="Inagaki H."/>
            <person name="Ikema Y."/>
            <person name="Okamoto S."/>
            <person name="Okitani R."/>
            <person name="Kawakami T."/>
            <person name="Noguchi S."/>
            <person name="Itoh T."/>
            <person name="Shigeta K."/>
            <person name="Senba T."/>
            <person name="Matsumura K."/>
            <person name="Nakajima Y."/>
            <person name="Mizuno T."/>
            <person name="Morinaga M."/>
            <person name="Sasaki M."/>
            <person name="Togashi T."/>
            <person name="Oyama M."/>
            <person name="Hata H."/>
            <person name="Watanabe M."/>
            <person name="Komatsu T."/>
            <person name="Mizushima-Sugano J."/>
            <person name="Satoh T."/>
            <person name="Shirai Y."/>
            <person name="Takahashi Y."/>
            <person name="Nakagawa K."/>
            <person name="Okumura K."/>
            <person name="Nagase T."/>
            <person name="Nomura N."/>
            <person name="Kikuchi H."/>
            <person name="Masuho Y."/>
            <person name="Yamashita R."/>
            <person name="Nakai K."/>
            <person name="Yada T."/>
            <person name="Nakamura Y."/>
            <person name="Ohara O."/>
            <person name="Isogai T."/>
            <person name="Sugano S."/>
        </authorList>
    </citation>
    <scope>NUCLEOTIDE SEQUENCE [LARGE SCALE MRNA]</scope>
    <source>
        <tissue>Lung</tissue>
    </source>
</reference>
<reference key="5">
    <citation type="journal article" date="2004" name="Genome Res.">
        <title>The status, quality, and expansion of the NIH full-length cDNA project: the Mammalian Gene Collection (MGC).</title>
        <authorList>
            <consortium name="The MGC Project Team"/>
        </authorList>
    </citation>
    <scope>NUCLEOTIDE SEQUENCE [LARGE SCALE MRNA]</scope>
    <source>
        <tissue>Brain</tissue>
        <tissue>Skin</tissue>
    </source>
</reference>
<reference key="6">
    <citation type="journal article" date="1993" name="Gene">
        <title>Isolation and characterization of the genes encoding mouse and human type-5 acid phosphatase.</title>
        <authorList>
            <person name="Cassady A.I."/>
            <person name="King A.G."/>
            <person name="Cross N.C.P."/>
            <person name="Hume D.A."/>
        </authorList>
    </citation>
    <scope>NUCLEOTIDE SEQUENCE [GENOMIC DNA] OF 1-245</scope>
</reference>
<reference key="7">
    <citation type="journal article" date="1989" name="Biochem. J.">
        <title>Purification and characterization of a tartrate-resistant acid phosphatase from human osteoclastomas.</title>
        <authorList>
            <person name="Hayman A.R."/>
            <person name="Warburton M.J."/>
            <person name="Pringle J.A.S."/>
            <person name="Coles B."/>
            <person name="Chambers T.J."/>
        </authorList>
    </citation>
    <scope>PROTEIN SEQUENCE OF 22-64 AND 183-202</scope>
    <source>
        <tissue>Osteoclastoma</tissue>
    </source>
</reference>
<reference key="8">
    <citation type="journal article" date="1992" name="Clin. Biochem.">
        <title>Heterogeneity of hairy cell tartrate-resistant acid phosphatase.</title>
        <authorList>
            <person name="Janckila A.J."/>
            <person name="Latham M.D."/>
            <person name="Lam K.-W."/>
            <person name="Chow K.-C."/>
            <person name="Li C.-Y."/>
            <person name="Yam L.T."/>
        </authorList>
    </citation>
    <scope>PROTEIN SEQUENCE OF 22-55 AND 183-203</scope>
    <scope>SUBUNIT</scope>
    <source>
        <tissue>Spleen</tissue>
    </source>
</reference>
<reference key="9">
    <citation type="journal article" date="1989" name="Biochem. Biophys. Res. Commun.">
        <title>Purification and N-terminal sequence of two tartrate-resistant acid phosphatases type-5 from the hairy cell leukemia spleen.</title>
        <authorList>
            <person name="Stepan J.J."/>
            <person name="Lau K.H.W."/>
            <person name="Mohan S."/>
            <person name="Kraenzlin M."/>
            <person name="Baylink D.J."/>
        </authorList>
    </citation>
    <scope>PROTEIN SEQUENCE OF 22-37</scope>
    <source>
        <tissue>Osteoclastoma</tissue>
    </source>
</reference>
<reference key="10">
    <citation type="journal article" date="1990" name="Biochem. Biophys. Res. Commun.">
        <title>Purification and N-terminal amino acid sequence of the tartrate-resistant acid phosphatase from human osteoclastoma: evidence for a single structure.</title>
        <authorList>
            <person name="Stepan J.J."/>
            <person name="Lau K.H.W."/>
            <person name="Mohan S."/>
            <person name="Singer F.R."/>
            <person name="Baylink D.J."/>
        </authorList>
    </citation>
    <scope>PROTEIN SEQUENCE OF 22-31</scope>
    <source>
        <tissue>Osteoclastoma</tissue>
    </source>
</reference>
<reference key="11">
    <citation type="journal article" date="1991" name="Biochem. J.">
        <title>Tartrate-resistant acid phosphatase from human osteoclastomas is translated as a single polypeptide.</title>
        <authorList>
            <person name="Hayman A.R."/>
            <person name="Dryden A.J."/>
            <person name="Chambers T.J."/>
            <person name="Warburton M.J."/>
        </authorList>
    </citation>
    <scope>SUBUNIT</scope>
</reference>
<reference key="12">
    <citation type="journal article" date="2005" name="J. Mol. Biol.">
        <title>Crystal structures of recombinant human purple acid phosphatase with and without an inhibitory conformation of the repression loop.</title>
        <authorList>
            <person name="Straeter N."/>
            <person name="Jasper B."/>
            <person name="Scholte M."/>
            <person name="Krebs B."/>
            <person name="Duff A.P."/>
            <person name="Langley D.B."/>
            <person name="Han R."/>
            <person name="Averill B.A."/>
            <person name="Freeman H.C."/>
            <person name="Guss J.M."/>
        </authorList>
    </citation>
    <scope>X-RAY CRYSTALLOGRAPHY (2.20 ANGSTROMS) OF 22-325 IN COMPLEX WITH IRON IONS</scope>
    <scope>GLYCOSYLATION AT ASN-116</scope>
</reference>
<reference key="13">
    <citation type="journal article" date="2011" name="Nat. Genet.">
        <title>Tartrate-resistant acid phosphatase deficiency causes a bone dysplasia with autoimmunity and a type I interferon expression signature.</title>
        <authorList>
            <person name="Briggs T.A."/>
            <person name="Rice G.I."/>
            <person name="Daly S."/>
            <person name="Urquhart J."/>
            <person name="Gornall H."/>
            <person name="Bader-Meunier B."/>
            <person name="Baskar K."/>
            <person name="Baskar S."/>
            <person name="Baudouin V."/>
            <person name="Beresford M.W."/>
            <person name="Black G.C."/>
            <person name="Dearman R.J."/>
            <person name="de Zegher F."/>
            <person name="Foster E.S."/>
            <person name="Frances C."/>
            <person name="Hayman A.R."/>
            <person name="Hilton E."/>
            <person name="Job-Deslandre C."/>
            <person name="Kulkarni M.L."/>
            <person name="Le Merrer M."/>
            <person name="Linglart A."/>
            <person name="Lovell S.C."/>
            <person name="Maurer K."/>
            <person name="Musset L."/>
            <person name="Navarro V."/>
            <person name="Picard C."/>
            <person name="Puel A."/>
            <person name="Rieux-Laucat F."/>
            <person name="Roifman C.M."/>
            <person name="Scholl-Burgi S."/>
            <person name="Smith N."/>
            <person name="Szynkiewicz M."/>
            <person name="Wiedeman A."/>
            <person name="Wouters C."/>
            <person name="Zeef L.A."/>
            <person name="Casanova J.L."/>
            <person name="Elkon K.B."/>
            <person name="Janckila A."/>
            <person name="Lebon P."/>
            <person name="Crow Y.J."/>
        </authorList>
    </citation>
    <scope>VARIANTS SPENCDI ILE-89; ARG-215; ASN-241 AND LYS-264</scope>
</reference>
<reference key="14">
    <citation type="journal article" date="2011" name="Nat. Genet.">
        <title>Genetic deficiency of tartrate-resistant acid phosphatase associated with skeletal dysplasia, cerebral calcifications and autoimmunity.</title>
        <authorList>
            <person name="Lausch E."/>
            <person name="Janecke A."/>
            <person name="Bros M."/>
            <person name="Trojandt S."/>
            <person name="Alanay Y."/>
            <person name="De Laet C."/>
            <person name="Hubner C.A."/>
            <person name="Meinecke P."/>
            <person name="Nishimura G."/>
            <person name="Matsuo M."/>
            <person name="Hirano Y."/>
            <person name="Tenoutasse S."/>
            <person name="Kiss A."/>
            <person name="Rosa R.F."/>
            <person name="Unger S.L."/>
            <person name="Renella R."/>
            <person name="Bonafe L."/>
            <person name="Spranger J."/>
            <person name="Unger S."/>
            <person name="Zabel B."/>
            <person name="Superti-Furga A."/>
        </authorList>
    </citation>
    <scope>VARIANTS SPENCDI MET-52; ARG-109; PRO-201; ARG-215; HIS-262; LYS-264 AND TYR-278 DEL</scope>
</reference>
<organism>
    <name type="scientific">Homo sapiens</name>
    <name type="common">Human</name>
    <dbReference type="NCBI Taxonomy" id="9606"/>
    <lineage>
        <taxon>Eukaryota</taxon>
        <taxon>Metazoa</taxon>
        <taxon>Chordata</taxon>
        <taxon>Craniata</taxon>
        <taxon>Vertebrata</taxon>
        <taxon>Euteleostomi</taxon>
        <taxon>Mammalia</taxon>
        <taxon>Eutheria</taxon>
        <taxon>Euarchontoglires</taxon>
        <taxon>Primates</taxon>
        <taxon>Haplorrhini</taxon>
        <taxon>Catarrhini</taxon>
        <taxon>Hominidae</taxon>
        <taxon>Homo</taxon>
    </lineage>
</organism>
<gene>
    <name type="primary">ACP5</name>
</gene>
<name>PPA5_HUMAN</name>
<protein>
    <recommendedName>
        <fullName>Tartrate-resistant acid phosphatase type 5</fullName>
        <shortName>TR-AP</shortName>
        <ecNumber>3.1.3.2</ecNumber>
    </recommendedName>
    <alternativeName>
        <fullName>Tartrate-resistant acid ATPase</fullName>
        <shortName>TrATPase</shortName>
    </alternativeName>
    <alternativeName>
        <fullName>Type 5 acid phosphatase</fullName>
    </alternativeName>
</protein>
<dbReference type="EC" id="3.1.3.2"/>
<dbReference type="EMBL" id="J04430">
    <property type="protein sequence ID" value="AAA76849.1"/>
    <property type="molecule type" value="mRNA"/>
</dbReference>
<dbReference type="EMBL" id="X14618">
    <property type="protein sequence ID" value="CAA32771.1"/>
    <property type="molecule type" value="mRNA"/>
</dbReference>
<dbReference type="EMBL" id="CR457078">
    <property type="protein sequence ID" value="CAG33359.1"/>
    <property type="molecule type" value="mRNA"/>
</dbReference>
<dbReference type="EMBL" id="AK290717">
    <property type="protein sequence ID" value="BAF83406.1"/>
    <property type="molecule type" value="mRNA"/>
</dbReference>
<dbReference type="EMBL" id="BC025414">
    <property type="protein sequence ID" value="AAH25414.1"/>
    <property type="molecule type" value="mRNA"/>
</dbReference>
<dbReference type="EMBL" id="BC111014">
    <property type="protein sequence ID" value="AAI11015.1"/>
    <property type="molecule type" value="mRNA"/>
</dbReference>
<dbReference type="EMBL" id="X67123">
    <property type="status" value="NOT_ANNOTATED_CDS"/>
    <property type="molecule type" value="Genomic_DNA"/>
</dbReference>
<dbReference type="CCDS" id="CCDS12265.1"/>
<dbReference type="PIR" id="S15752">
    <property type="entry name" value="S15752"/>
</dbReference>
<dbReference type="RefSeq" id="NP_001104504.1">
    <property type="nucleotide sequence ID" value="NM_001111034.3"/>
</dbReference>
<dbReference type="RefSeq" id="NP_001104505.1">
    <property type="nucleotide sequence ID" value="NM_001111035.3"/>
</dbReference>
<dbReference type="RefSeq" id="NP_001104506.1">
    <property type="nucleotide sequence ID" value="NM_001111036.3"/>
</dbReference>
<dbReference type="RefSeq" id="NP_001308952.1">
    <property type="nucleotide sequence ID" value="NM_001322023.2"/>
</dbReference>
<dbReference type="RefSeq" id="NP_001602.1">
    <property type="nucleotide sequence ID" value="NM_001611.5"/>
</dbReference>
<dbReference type="RefSeq" id="XP_005259995.1">
    <property type="nucleotide sequence ID" value="XM_005259938.2"/>
</dbReference>
<dbReference type="RefSeq" id="XP_011526371.1">
    <property type="nucleotide sequence ID" value="XM_011528069.3"/>
</dbReference>
<dbReference type="RefSeq" id="XP_047294900.1">
    <property type="nucleotide sequence ID" value="XM_047438944.1"/>
</dbReference>
<dbReference type="RefSeq" id="XP_047294901.1">
    <property type="nucleotide sequence ID" value="XM_047438945.1"/>
</dbReference>
<dbReference type="RefSeq" id="XP_054177203.1">
    <property type="nucleotide sequence ID" value="XM_054321228.1"/>
</dbReference>
<dbReference type="RefSeq" id="XP_054177204.1">
    <property type="nucleotide sequence ID" value="XM_054321229.1"/>
</dbReference>
<dbReference type="RefSeq" id="XP_054177205.1">
    <property type="nucleotide sequence ID" value="XM_054321230.1"/>
</dbReference>
<dbReference type="RefSeq" id="XP_054177206.1">
    <property type="nucleotide sequence ID" value="XM_054321231.1"/>
</dbReference>
<dbReference type="PDB" id="1WAR">
    <property type="method" value="X-ray"/>
    <property type="resolution" value="2.22 A"/>
    <property type="chains" value="A=22-325"/>
</dbReference>
<dbReference type="PDB" id="2BQ8">
    <property type="method" value="X-ray"/>
    <property type="resolution" value="2.20 A"/>
    <property type="chains" value="X=22-325"/>
</dbReference>
<dbReference type="PDBsum" id="1WAR"/>
<dbReference type="PDBsum" id="2BQ8"/>
<dbReference type="SMR" id="P13686"/>
<dbReference type="BioGRID" id="106570">
    <property type="interactions" value="32"/>
</dbReference>
<dbReference type="FunCoup" id="P13686">
    <property type="interactions" value="343"/>
</dbReference>
<dbReference type="IntAct" id="P13686">
    <property type="interactions" value="17"/>
</dbReference>
<dbReference type="MINT" id="P13686"/>
<dbReference type="STRING" id="9606.ENSP00000218758"/>
<dbReference type="DEPOD" id="ACP5"/>
<dbReference type="GlyCosmos" id="P13686">
    <property type="glycosylation" value="2 sites, No reported glycans"/>
</dbReference>
<dbReference type="GlyGen" id="P13686">
    <property type="glycosylation" value="4 sites"/>
</dbReference>
<dbReference type="iPTMnet" id="P13686"/>
<dbReference type="PhosphoSitePlus" id="P13686"/>
<dbReference type="BioMuta" id="ACP5"/>
<dbReference type="DMDM" id="56757583"/>
<dbReference type="jPOST" id="P13686"/>
<dbReference type="MassIVE" id="P13686"/>
<dbReference type="PaxDb" id="9606-ENSP00000468767"/>
<dbReference type="PeptideAtlas" id="P13686"/>
<dbReference type="ProteomicsDB" id="52960"/>
<dbReference type="Antibodypedia" id="25921">
    <property type="antibodies" value="594 antibodies from 35 providers"/>
</dbReference>
<dbReference type="DNASU" id="54"/>
<dbReference type="Ensembl" id="ENST00000218758.10">
    <property type="protein sequence ID" value="ENSP00000218758.4"/>
    <property type="gene ID" value="ENSG00000102575.14"/>
</dbReference>
<dbReference type="Ensembl" id="ENST00000412435.7">
    <property type="protein sequence ID" value="ENSP00000392374.1"/>
    <property type="gene ID" value="ENSG00000102575.14"/>
</dbReference>
<dbReference type="Ensembl" id="ENST00000589792.6">
    <property type="protein sequence ID" value="ENSP00000468685.2"/>
    <property type="gene ID" value="ENSG00000102575.14"/>
</dbReference>
<dbReference type="Ensembl" id="ENST00000590832.2">
    <property type="protein sequence ID" value="ENSP00000465127.2"/>
    <property type="gene ID" value="ENSG00000102575.14"/>
</dbReference>
<dbReference type="Ensembl" id="ENST00000591319.2">
    <property type="protein sequence ID" value="ENSP00000464831.2"/>
    <property type="gene ID" value="ENSG00000102575.14"/>
</dbReference>
<dbReference type="Ensembl" id="ENST00000592659.2">
    <property type="protein sequence ID" value="ENSP00000465498.2"/>
    <property type="gene ID" value="ENSG00000102575.14"/>
</dbReference>
<dbReference type="Ensembl" id="ENST00000592828.7">
    <property type="protein sequence ID" value="ENSP00000468767.3"/>
    <property type="gene ID" value="ENSG00000102575.14"/>
</dbReference>
<dbReference type="Ensembl" id="ENST00000648477.1">
    <property type="protein sequence ID" value="ENSP00000496973.1"/>
    <property type="gene ID" value="ENSG00000102575.14"/>
</dbReference>
<dbReference type="Ensembl" id="ENST00000649386.2">
    <property type="protein sequence ID" value="ENSP00000497140.2"/>
    <property type="gene ID" value="ENSG00000102575.14"/>
</dbReference>
<dbReference type="Ensembl" id="ENST00000695791.1">
    <property type="protein sequence ID" value="ENSP00000512173.1"/>
    <property type="gene ID" value="ENSG00000102575.14"/>
</dbReference>
<dbReference type="Ensembl" id="ENST00000695811.1">
    <property type="protein sequence ID" value="ENSP00000512191.1"/>
    <property type="gene ID" value="ENSG00000102575.14"/>
</dbReference>
<dbReference type="GeneID" id="54"/>
<dbReference type="KEGG" id="hsa:54"/>
<dbReference type="MANE-Select" id="ENST00000648477.1">
    <property type="protein sequence ID" value="ENSP00000496973.1"/>
    <property type="RefSeq nucleotide sequence ID" value="NM_001611.5"/>
    <property type="RefSeq protein sequence ID" value="NP_001602.1"/>
</dbReference>
<dbReference type="UCSC" id="uc002msg.5">
    <property type="organism name" value="human"/>
</dbReference>
<dbReference type="AGR" id="HGNC:124"/>
<dbReference type="CTD" id="54"/>
<dbReference type="DisGeNET" id="54"/>
<dbReference type="GeneCards" id="ACP5"/>
<dbReference type="HGNC" id="HGNC:124">
    <property type="gene designation" value="ACP5"/>
</dbReference>
<dbReference type="HPA" id="ENSG00000102575">
    <property type="expression patterns" value="Tissue enhanced (lung)"/>
</dbReference>
<dbReference type="MalaCards" id="ACP5"/>
<dbReference type="MIM" id="171640">
    <property type="type" value="gene"/>
</dbReference>
<dbReference type="MIM" id="607944">
    <property type="type" value="phenotype"/>
</dbReference>
<dbReference type="neXtProt" id="NX_P13686"/>
<dbReference type="OpenTargets" id="ENSG00000102575"/>
<dbReference type="Orphanet" id="1855">
    <property type="disease" value="Spondyloenchondrodysplasia"/>
</dbReference>
<dbReference type="PharmGKB" id="PA24448"/>
<dbReference type="VEuPathDB" id="HostDB:ENSG00000102575"/>
<dbReference type="eggNOG" id="KOG2679">
    <property type="taxonomic scope" value="Eukaryota"/>
</dbReference>
<dbReference type="GeneTree" id="ENSGT00390000016735"/>
<dbReference type="HOGENOM" id="CLU_043332_1_0_1"/>
<dbReference type="InParanoid" id="P13686"/>
<dbReference type="OMA" id="GFCIHEL"/>
<dbReference type="OrthoDB" id="411211at2759"/>
<dbReference type="PAN-GO" id="P13686">
    <property type="GO annotations" value="4 GO annotations based on evolutionary models"/>
</dbReference>
<dbReference type="PhylomeDB" id="P13686"/>
<dbReference type="TreeFam" id="TF313175"/>
<dbReference type="BRENDA" id="3.1.3.2">
    <property type="organism ID" value="2681"/>
</dbReference>
<dbReference type="PathwayCommons" id="P13686"/>
<dbReference type="Reactome" id="R-HSA-196843">
    <property type="pathway name" value="Vitamin B2 (riboflavin) metabolism"/>
</dbReference>
<dbReference type="SABIO-RK" id="P13686"/>
<dbReference type="SignaLink" id="P13686"/>
<dbReference type="SIGNOR" id="P13686"/>
<dbReference type="BioGRID-ORCS" id="54">
    <property type="hits" value="19 hits in 1157 CRISPR screens"/>
</dbReference>
<dbReference type="ChiTaRS" id="ACP5">
    <property type="organism name" value="human"/>
</dbReference>
<dbReference type="EvolutionaryTrace" id="P13686"/>
<dbReference type="GeneWiki" id="Tartrate-resistant_acid_phosphatase"/>
<dbReference type="GenomeRNAi" id="54"/>
<dbReference type="Pharos" id="P13686">
    <property type="development level" value="Tbio"/>
</dbReference>
<dbReference type="PRO" id="PR:P13686"/>
<dbReference type="Proteomes" id="UP000005640">
    <property type="component" value="Chromosome 19"/>
</dbReference>
<dbReference type="RNAct" id="P13686">
    <property type="molecule type" value="protein"/>
</dbReference>
<dbReference type="Bgee" id="ENSG00000102575">
    <property type="expression patterns" value="Expressed in periodontal ligament and 153 other cell types or tissues"/>
</dbReference>
<dbReference type="ExpressionAtlas" id="P13686">
    <property type="expression patterns" value="baseline and differential"/>
</dbReference>
<dbReference type="GO" id="GO:0005829">
    <property type="term" value="C:cytosol"/>
    <property type="evidence" value="ECO:0000304"/>
    <property type="project" value="Reactome"/>
</dbReference>
<dbReference type="GO" id="GO:0005764">
    <property type="term" value="C:lysosome"/>
    <property type="evidence" value="ECO:0007669"/>
    <property type="project" value="UniProtKB-SubCell"/>
</dbReference>
<dbReference type="GO" id="GO:0016020">
    <property type="term" value="C:membrane"/>
    <property type="evidence" value="ECO:0000304"/>
    <property type="project" value="ProtInc"/>
</dbReference>
<dbReference type="GO" id="GO:0003993">
    <property type="term" value="F:acid phosphatase activity"/>
    <property type="evidence" value="ECO:0000318"/>
    <property type="project" value="GO_Central"/>
</dbReference>
<dbReference type="GO" id="GO:0008199">
    <property type="term" value="F:ferric iron binding"/>
    <property type="evidence" value="ECO:0000314"/>
    <property type="project" value="UniProtKB"/>
</dbReference>
<dbReference type="GO" id="GO:0008198">
    <property type="term" value="F:ferrous iron binding"/>
    <property type="evidence" value="ECO:0000314"/>
    <property type="project" value="UniProtKB"/>
</dbReference>
<dbReference type="GO" id="GO:0060349">
    <property type="term" value="P:bone morphogenesis"/>
    <property type="evidence" value="ECO:0007669"/>
    <property type="project" value="Ensembl"/>
</dbReference>
<dbReference type="GO" id="GO:0045453">
    <property type="term" value="P:bone resorption"/>
    <property type="evidence" value="ECO:0000318"/>
    <property type="project" value="GO_Central"/>
</dbReference>
<dbReference type="GO" id="GO:0050830">
    <property type="term" value="P:defense response to Gram-positive bacterium"/>
    <property type="evidence" value="ECO:0007669"/>
    <property type="project" value="Ensembl"/>
</dbReference>
<dbReference type="GO" id="GO:0050728">
    <property type="term" value="P:negative regulation of inflammatory response"/>
    <property type="evidence" value="ECO:0007669"/>
    <property type="project" value="Ensembl"/>
</dbReference>
<dbReference type="GO" id="GO:0032691">
    <property type="term" value="P:negative regulation of interleukin-1 beta production"/>
    <property type="evidence" value="ECO:0007669"/>
    <property type="project" value="Ensembl"/>
</dbReference>
<dbReference type="GO" id="GO:0032695">
    <property type="term" value="P:negative regulation of interleukin-12 production"/>
    <property type="evidence" value="ECO:0007669"/>
    <property type="project" value="Ensembl"/>
</dbReference>
<dbReference type="GO" id="GO:0010936">
    <property type="term" value="P:negative regulation of macrophage cytokine production"/>
    <property type="evidence" value="ECO:0007669"/>
    <property type="project" value="Ensembl"/>
</dbReference>
<dbReference type="GO" id="GO:0045019">
    <property type="term" value="P:negative regulation of nitric oxide biosynthetic process"/>
    <property type="evidence" value="ECO:0007669"/>
    <property type="project" value="Ensembl"/>
</dbReference>
<dbReference type="GO" id="GO:0032929">
    <property type="term" value="P:negative regulation of superoxide anion generation"/>
    <property type="evidence" value="ECO:0007669"/>
    <property type="project" value="Ensembl"/>
</dbReference>
<dbReference type="GO" id="GO:0032720">
    <property type="term" value="P:negative regulation of tumor necrosis factor production"/>
    <property type="evidence" value="ECO:0007669"/>
    <property type="project" value="Ensembl"/>
</dbReference>
<dbReference type="GO" id="GO:0006809">
    <property type="term" value="P:nitric oxide biosynthetic process"/>
    <property type="evidence" value="ECO:0007669"/>
    <property type="project" value="Ensembl"/>
</dbReference>
<dbReference type="GO" id="GO:0034097">
    <property type="term" value="P:response to cytokine"/>
    <property type="evidence" value="ECO:0007669"/>
    <property type="project" value="Ensembl"/>
</dbReference>
<dbReference type="GO" id="GO:0032496">
    <property type="term" value="P:response to lipopolysaccharide"/>
    <property type="evidence" value="ECO:0007669"/>
    <property type="project" value="Ensembl"/>
</dbReference>
<dbReference type="GO" id="GO:0042554">
    <property type="term" value="P:superoxide anion generation"/>
    <property type="evidence" value="ECO:0007669"/>
    <property type="project" value="Ensembl"/>
</dbReference>
<dbReference type="CDD" id="cd07378">
    <property type="entry name" value="MPP_ACP5"/>
    <property type="match status" value="1"/>
</dbReference>
<dbReference type="FunFam" id="3.60.21.10:FF:000033">
    <property type="entry name" value="Tartrate-resistant acid phosphatase type 5"/>
    <property type="match status" value="1"/>
</dbReference>
<dbReference type="Gene3D" id="3.60.21.10">
    <property type="match status" value="1"/>
</dbReference>
<dbReference type="InterPro" id="IPR024927">
    <property type="entry name" value="Acid_PPase"/>
</dbReference>
<dbReference type="InterPro" id="IPR004843">
    <property type="entry name" value="Calcineurin-like_PHP_ApaH"/>
</dbReference>
<dbReference type="InterPro" id="IPR029052">
    <property type="entry name" value="Metallo-depent_PP-like"/>
</dbReference>
<dbReference type="InterPro" id="IPR051558">
    <property type="entry name" value="Metallophosphoesterase_PAP"/>
</dbReference>
<dbReference type="PANTHER" id="PTHR10161">
    <property type="entry name" value="TARTRATE-RESISTANT ACID PHOSPHATASE TYPE 5"/>
    <property type="match status" value="1"/>
</dbReference>
<dbReference type="PANTHER" id="PTHR10161:SF14">
    <property type="entry name" value="TARTRATE-RESISTANT ACID PHOSPHATASE TYPE 5"/>
    <property type="match status" value="1"/>
</dbReference>
<dbReference type="Pfam" id="PF00149">
    <property type="entry name" value="Metallophos"/>
    <property type="match status" value="1"/>
</dbReference>
<dbReference type="PIRSF" id="PIRSF000898">
    <property type="entry name" value="Acid_Ptase_5"/>
    <property type="match status" value="1"/>
</dbReference>
<dbReference type="SUPFAM" id="SSF56300">
    <property type="entry name" value="Metallo-dependent phosphatases"/>
    <property type="match status" value="1"/>
</dbReference>
<feature type="signal peptide" evidence="3 8 9 10">
    <location>
        <begin position="1"/>
        <end position="21"/>
    </location>
</feature>
<feature type="chain" id="PRO_0000023981" description="Tartrate-resistant acid phosphatase type 5">
    <location>
        <begin position="22"/>
        <end position="325"/>
    </location>
</feature>
<feature type="binding site">
    <location>
        <position position="33"/>
    </location>
    <ligand>
        <name>Fe cation</name>
        <dbReference type="ChEBI" id="CHEBI:24875"/>
        <label>1</label>
    </ligand>
</feature>
<feature type="binding site">
    <location>
        <position position="71"/>
    </location>
    <ligand>
        <name>Fe cation</name>
        <dbReference type="ChEBI" id="CHEBI:24875"/>
        <label>1</label>
    </ligand>
</feature>
<feature type="binding site">
    <location>
        <position position="71"/>
    </location>
    <ligand>
        <name>Fe cation</name>
        <dbReference type="ChEBI" id="CHEBI:24875"/>
        <label>2</label>
    </ligand>
</feature>
<feature type="binding site">
    <location>
        <position position="74"/>
    </location>
    <ligand>
        <name>Fe cation</name>
        <dbReference type="ChEBI" id="CHEBI:24875"/>
        <label>1</label>
    </ligand>
</feature>
<feature type="binding site">
    <location>
        <position position="110"/>
    </location>
    <ligand>
        <name>Fe cation</name>
        <dbReference type="ChEBI" id="CHEBI:24875"/>
        <label>2</label>
    </ligand>
</feature>
<feature type="binding site">
    <location>
        <position position="205"/>
    </location>
    <ligand>
        <name>Fe cation</name>
        <dbReference type="ChEBI" id="CHEBI:24875"/>
        <label>2</label>
    </ligand>
</feature>
<feature type="binding site">
    <location>
        <position position="240"/>
    </location>
    <ligand>
        <name>Fe cation</name>
        <dbReference type="ChEBI" id="CHEBI:24875"/>
        <label>2</label>
    </ligand>
</feature>
<feature type="binding site">
    <location>
        <position position="242"/>
    </location>
    <ligand>
        <name>Fe cation</name>
        <dbReference type="ChEBI" id="CHEBI:24875"/>
        <label>1</label>
    </ligand>
</feature>
<feature type="glycosylation site" description="N-linked (GlcNAc...) asparagine" evidence="4">
    <location>
        <position position="116"/>
    </location>
</feature>
<feature type="glycosylation site" description="N-linked (GlcNAc...) asparagine" evidence="2">
    <location>
        <position position="147"/>
    </location>
</feature>
<feature type="disulfide bond" evidence="1">
    <location>
        <begin position="161"/>
        <end position="219"/>
    </location>
</feature>
<feature type="sequence variant" id="VAR_065920" description="In SPENCDI." evidence="6">
    <original>K</original>
    <variation>M</variation>
    <location>
        <position position="52"/>
    </location>
</feature>
<feature type="sequence variant" id="VAR_065921" description="In SPENCDI; dbSNP:rs387906668." evidence="7">
    <original>T</original>
    <variation>I</variation>
    <location>
        <position position="89"/>
    </location>
</feature>
<feature type="sequence variant" id="VAR_065922" description="In SPENCDI; dbSNP:rs781050795." evidence="6">
    <original>G</original>
    <variation>R</variation>
    <location>
        <position position="109"/>
    </location>
</feature>
<feature type="sequence variant" id="VAR_020602" description="In dbSNP:rs2305799." evidence="11">
    <original>V</original>
    <variation>M</variation>
    <location>
        <position position="148"/>
    </location>
</feature>
<feature type="sequence variant" id="VAR_020603" description="In dbSNP:rs2229531." evidence="11">
    <original>V</original>
    <variation>M</variation>
    <location>
        <position position="200"/>
    </location>
</feature>
<feature type="sequence variant" id="VAR_065923" description="In SPENCDI; dbSNP:rs387906672." evidence="6">
    <original>L</original>
    <variation>P</variation>
    <location>
        <position position="201"/>
    </location>
</feature>
<feature type="sequence variant" id="VAR_065924" description="In SPENCDI; dbSNP:rs781199182." evidence="6 7">
    <original>G</original>
    <variation>R</variation>
    <location>
        <position position="215"/>
    </location>
</feature>
<feature type="sequence variant" id="VAR_029288" description="In dbSNP:rs2229532.">
    <original>V</original>
    <variation>I</variation>
    <location>
        <position position="221"/>
    </location>
</feature>
<feature type="sequence variant" id="VAR_065925" description="In SPENCDI." evidence="7">
    <original>D</original>
    <variation>N</variation>
    <location>
        <position position="241"/>
    </location>
</feature>
<feature type="sequence variant" id="VAR_065926" description="In SPENCDI; dbSNP:rs1449857485." evidence="6">
    <original>N</original>
    <variation>H</variation>
    <location>
        <position position="262"/>
    </location>
</feature>
<feature type="sequence variant" id="VAR_065927" description="In SPENCDI; dbSNP:rs387906670." evidence="6 7">
    <original>M</original>
    <variation>K</variation>
    <location>
        <position position="264"/>
    </location>
</feature>
<feature type="sequence variant" id="VAR_065928" description="In SPENCDI." evidence="6">
    <location>
        <position position="278"/>
    </location>
</feature>
<feature type="sequence conflict" description="In Ref. 1; AAA76849." evidence="12" ref="1">
    <original>AR</original>
    <variation>GP</variation>
    <location>
        <begin position="45"/>
        <end position="46"/>
    </location>
</feature>
<feature type="sequence conflict" description="In Ref. 8; AA sequence." evidence="12" ref="8">
    <original>E</original>
    <variation>G</variation>
    <location>
        <position position="47"/>
    </location>
</feature>
<feature type="sequence conflict" description="In Ref. 7; AA sequence." evidence="12" ref="7">
    <original>E</original>
    <variation>Q</variation>
    <location>
        <position position="47"/>
    </location>
</feature>
<feature type="sequence conflict" description="In Ref. 7; AA sequence." evidence="12" ref="7">
    <original>N</original>
    <variation>W</variation>
    <location>
        <position position="50"/>
    </location>
</feature>
<feature type="sequence conflict" description="In Ref. 1; AAA76849." evidence="12" ref="1">
    <original>DVKL</original>
    <variation>LT</variation>
    <location>
        <begin position="177"/>
        <end position="180"/>
    </location>
</feature>
<feature type="strand" evidence="14">
    <location>
        <begin position="26"/>
        <end position="31"/>
    </location>
</feature>
<feature type="helix" evidence="14">
    <location>
        <begin position="45"/>
        <end position="61"/>
    </location>
</feature>
<feature type="strand" evidence="14">
    <location>
        <begin position="64"/>
        <end position="68"/>
    </location>
</feature>
<feature type="turn" evidence="14">
    <location>
        <begin position="74"/>
        <end position="76"/>
    </location>
</feature>
<feature type="helix" evidence="14">
    <location>
        <begin position="85"/>
        <end position="89"/>
    </location>
</feature>
<feature type="turn" evidence="14">
    <location>
        <begin position="90"/>
        <end position="93"/>
    </location>
</feature>
<feature type="helix" evidence="14">
    <location>
        <begin position="97"/>
        <end position="100"/>
    </location>
</feature>
<feature type="strand" evidence="14">
    <location>
        <begin position="104"/>
        <end position="106"/>
    </location>
</feature>
<feature type="helix" evidence="14">
    <location>
        <begin position="110"/>
        <end position="113"/>
    </location>
</feature>
<feature type="helix" evidence="14">
    <location>
        <begin position="117"/>
        <end position="122"/>
    </location>
</feature>
<feature type="helix" evidence="14">
    <location>
        <begin position="123"/>
        <end position="125"/>
    </location>
</feature>
<feature type="strand" evidence="14">
    <location>
        <begin position="128"/>
        <end position="131"/>
    </location>
</feature>
<feature type="strand" evidence="14">
    <location>
        <begin position="134"/>
        <end position="142"/>
    </location>
</feature>
<feature type="strand" evidence="14">
    <location>
        <begin position="149"/>
        <end position="154"/>
    </location>
</feature>
<feature type="helix" evidence="14">
    <location>
        <begin position="157"/>
        <end position="161"/>
    </location>
</feature>
<feature type="helix" evidence="13">
    <location>
        <begin position="164"/>
        <end position="166"/>
    </location>
</feature>
<feature type="helix" evidence="14">
    <location>
        <begin position="178"/>
        <end position="194"/>
    </location>
</feature>
<feature type="strand" evidence="14">
    <location>
        <begin position="198"/>
        <end position="203"/>
    </location>
</feature>
<feature type="strand" evidence="14">
    <location>
        <begin position="211"/>
        <end position="214"/>
    </location>
</feature>
<feature type="helix" evidence="14">
    <location>
        <begin position="218"/>
        <end position="223"/>
    </location>
</feature>
<feature type="helix" evidence="14">
    <location>
        <begin position="225"/>
        <end position="230"/>
    </location>
</feature>
<feature type="strand" evidence="14">
    <location>
        <begin position="235"/>
        <end position="238"/>
    </location>
</feature>
<feature type="strand" evidence="14">
    <location>
        <begin position="240"/>
        <end position="248"/>
    </location>
</feature>
<feature type="strand" evidence="14">
    <location>
        <begin position="254"/>
        <end position="258"/>
    </location>
</feature>
<feature type="helix" evidence="14">
    <location>
        <begin position="271"/>
        <end position="273"/>
    </location>
</feature>
<feature type="strand" evidence="14">
    <location>
        <begin position="279"/>
        <end position="283"/>
    </location>
</feature>
<feature type="strand" evidence="14">
    <location>
        <begin position="291"/>
        <end position="297"/>
    </location>
</feature>
<feature type="strand" evidence="14">
    <location>
        <begin position="299"/>
        <end position="308"/>
    </location>
</feature>
<feature type="strand" evidence="14">
    <location>
        <begin position="313"/>
        <end position="320"/>
    </location>
</feature>
<sequence>MDMWTALLILQALLLPSLADGATPALRFVAVGDWGGVPNAPFHTAREMANAKEIARTVQILGADFILSLGDNFYFTGVQDINDKRFQETFEDVFSDRSLRKVPWYVLAGNHDHLGNVSAQIAYSKISKRWNFPSPFYRLHFKIPQTNVSVAIFMLDTVTLCGNSDDFLSQQPERPRDVKLARTQLSWLKKQLAAAREDYVLVAGHYPVWSIAEHGPTHCLVKQLRPLLATYGVTAYLCGHDHNLQYLQDENGVGYVLSGAGNFMDPSKRHQRKVPNGYLRFHYGTEDSLGGFAYVEISSKEMTVTYIEASGKSLFKTRLPRRARP</sequence>
<keyword id="KW-0002">3D-structure</keyword>
<keyword id="KW-0903">Direct protein sequencing</keyword>
<keyword id="KW-0225">Disease variant</keyword>
<keyword id="KW-1015">Disulfide bond</keyword>
<keyword id="KW-0325">Glycoprotein</keyword>
<keyword id="KW-0378">Hydrolase</keyword>
<keyword id="KW-0408">Iron</keyword>
<keyword id="KW-0458">Lysosome</keyword>
<keyword id="KW-0479">Metal-binding</keyword>
<keyword id="KW-1267">Proteomics identification</keyword>
<keyword id="KW-1185">Reference proteome</keyword>
<keyword id="KW-0732">Signal</keyword>
<comment type="function">
    <text>Involved in osteopontin/bone sialoprotein dephosphorylation. Its expression seems to increase in certain pathological states such as Gaucher and Hodgkin diseases, the hairy cell, the B-cell, and the T-cell leukemias.</text>
</comment>
<comment type="catalytic activity">
    <reaction>
        <text>a phosphate monoester + H2O = an alcohol + phosphate</text>
        <dbReference type="Rhea" id="RHEA:15017"/>
        <dbReference type="ChEBI" id="CHEBI:15377"/>
        <dbReference type="ChEBI" id="CHEBI:30879"/>
        <dbReference type="ChEBI" id="CHEBI:43474"/>
        <dbReference type="ChEBI" id="CHEBI:67140"/>
        <dbReference type="EC" id="3.1.3.2"/>
    </reaction>
</comment>
<comment type="cofactor">
    <cofactor>
        <name>Fe cation</name>
        <dbReference type="ChEBI" id="CHEBI:24875"/>
    </cofactor>
    <text>Binds 2 iron ions per subunit.</text>
</comment>
<comment type="subunit">
    <text evidence="3 4 5">Exists either as monomer or, after proteolytic processing, as a dimer of two chains linked by disulfide bond(s).</text>
</comment>
<comment type="subcellular location">
    <subcellularLocation>
        <location>Lysosome</location>
    </subcellularLocation>
</comment>
<comment type="disease" evidence="6 7">
    <disease id="DI-03197">
        <name>Spondyloenchondrodysplasia with immune dysregulation</name>
        <acronym>SPENCDI</acronym>
        <description>A disease characterized by vertebral and metaphyseal dysplasia, spasticity with cerebral calcifications, and strong predisposition to autoimmune diseases. The skeletal dysplasia is characterized by radiolucent and irregular spondylar and metaphyseal lesions that represent islands of chondroid tissue within bone.</description>
        <dbReference type="MIM" id="607944"/>
    </disease>
    <text>The disease is caused by variants affecting the gene represented in this entry. ACP5 inactivating mutations result in a functional excess of phosphorylated osteopontin causing deregulation of osteopontin signaling and consequential autoimmune disease.</text>
</comment>
<comment type="similarity">
    <text evidence="12">Belongs to the metallophosphoesterase superfamily. Purple acid phosphatase family.</text>
</comment>
<comment type="online information" name="Wikipedia">
    <link uri="https://en.wikipedia.org/wiki/Tartrate-resistant_acid_phosphatase"/>
    <text>Tartrate-resistant acid phosphatase entry</text>
</comment>
<proteinExistence type="evidence at protein level"/>
<evidence type="ECO:0000250" key="1"/>
<evidence type="ECO:0000255" key="2"/>
<evidence type="ECO:0000269" key="3">
    <source>
    </source>
</evidence>
<evidence type="ECO:0000269" key="4">
    <source>
    </source>
</evidence>
<evidence type="ECO:0000269" key="5">
    <source>
    </source>
</evidence>
<evidence type="ECO:0000269" key="6">
    <source>
    </source>
</evidence>
<evidence type="ECO:0000269" key="7">
    <source>
    </source>
</evidence>
<evidence type="ECO:0000269" key="8">
    <source>
    </source>
</evidence>
<evidence type="ECO:0000269" key="9">
    <source>
    </source>
</evidence>
<evidence type="ECO:0000269" key="10">
    <source>
    </source>
</evidence>
<evidence type="ECO:0000269" key="11">
    <source ref="3"/>
</evidence>
<evidence type="ECO:0000305" key="12"/>
<evidence type="ECO:0007829" key="13">
    <source>
        <dbReference type="PDB" id="1WAR"/>
    </source>
</evidence>
<evidence type="ECO:0007829" key="14">
    <source>
        <dbReference type="PDB" id="2BQ8"/>
    </source>
</evidence>
<accession>P13686</accession>
<accession>A8K3V2</accession>
<accession>Q2TAB1</accession>
<accession>Q6IAS6</accession>
<accession>Q9UCJ5</accession>
<accession>Q9UCJ6</accession>
<accession>Q9UCJ7</accession>